<feature type="signal peptide" evidence="3">
    <location>
        <begin position="1"/>
        <end position="24"/>
    </location>
</feature>
<feature type="chain" id="PRO_0000015593" description="Interleukin-6">
    <location>
        <begin position="25"/>
        <end position="211"/>
    </location>
</feature>
<feature type="modified residue" description="Phosphoserine" evidence="1">
    <location>
        <position position="79"/>
    </location>
</feature>
<feature type="disulfide bond" evidence="1">
    <location>
        <begin position="70"/>
        <end position="76"/>
    </location>
</feature>
<feature type="disulfide bond" evidence="1">
    <location>
        <begin position="99"/>
        <end position="109"/>
    </location>
</feature>
<accession>P20607</accession>
<organism>
    <name type="scientific">Rattus norvegicus</name>
    <name type="common">Rat</name>
    <dbReference type="NCBI Taxonomy" id="10116"/>
    <lineage>
        <taxon>Eukaryota</taxon>
        <taxon>Metazoa</taxon>
        <taxon>Chordata</taxon>
        <taxon>Craniata</taxon>
        <taxon>Vertebrata</taxon>
        <taxon>Euteleostomi</taxon>
        <taxon>Mammalia</taxon>
        <taxon>Eutheria</taxon>
        <taxon>Euarchontoglires</taxon>
        <taxon>Glires</taxon>
        <taxon>Rodentia</taxon>
        <taxon>Myomorpha</taxon>
        <taxon>Muroidea</taxon>
        <taxon>Muridae</taxon>
        <taxon>Murinae</taxon>
        <taxon>Rattus</taxon>
    </lineage>
</organism>
<proteinExistence type="evidence at transcript level"/>
<gene>
    <name evidence="6" type="primary">Il6</name>
    <name type="synonym">Il-6</name>
</gene>
<name>IL6_RAT</name>
<keyword id="KW-0011">Acute phase</keyword>
<keyword id="KW-0202">Cytokine</keyword>
<keyword id="KW-1015">Disulfide bond</keyword>
<keyword id="KW-0339">Growth factor</keyword>
<keyword id="KW-0597">Phosphoprotein</keyword>
<keyword id="KW-1185">Reference proteome</keyword>
<keyword id="KW-0964">Secreted</keyword>
<keyword id="KW-0732">Signal</keyword>
<protein>
    <recommendedName>
        <fullName evidence="5">Interleukin-6</fullName>
        <shortName>IL-6</shortName>
    </recommendedName>
</protein>
<sequence>MKFLSARDFQPVAFLGLMLLTATAFPTSQVRRGDFTEDTTHNRPVYTTSQVGGLITYVLREILEMRKELCNGNSDCMNSDDALSENNLKLPEIQRNDGCFQTGYNQEICLLKICSGLLEFRFYLEFVKNNLQDNKKDKARVIQSNTETLVHIFKQEIKDSYKIVLPTPTSNALLMEKLESQKEWLRTKTIQLILKALEEFLKVTMRSTRQT</sequence>
<evidence type="ECO:0000250" key="1">
    <source>
        <dbReference type="UniProtKB" id="P05231"/>
    </source>
</evidence>
<evidence type="ECO:0000250" key="2">
    <source>
        <dbReference type="UniProtKB" id="P08505"/>
    </source>
</evidence>
<evidence type="ECO:0000255" key="3"/>
<evidence type="ECO:0000269" key="4">
    <source>
    </source>
</evidence>
<evidence type="ECO:0000305" key="5"/>
<evidence type="ECO:0000312" key="6">
    <source>
        <dbReference type="RGD" id="2901"/>
    </source>
</evidence>
<comment type="function">
    <text evidence="2">Cytokine with a wide variety of biological functions in immunity, tissue regeneration, and metabolism. Binds to IL6R, then the complex associates to the signaling subunit IL6ST/gp130 to trigger the intracellular IL6-signaling pathway. The interaction with the membrane-bound IL6R and IL6ST stimulates 'classic signaling', whereas the binding of IL6 and soluble IL6R to IL6ST stimulates 'trans-signaling'. Alternatively, 'cluster signaling' occurs when membrane-bound IL6:IL6R complexes on transmitter cells activate IL6ST receptors on neighboring receiver cells.</text>
</comment>
<comment type="function">
    <text evidence="2">IL6 is a potent inducer of the acute phase response. Rapid production of IL6 contributes to host defense during infection and tissue injury, but excessive IL6 synthesis is involved in disease pathology. In the innate immune response, is synthesized by myeloid cells, such as macrophages and dendritic cells, upon recognition of pathogens through toll-like receptors (TLRs) at the site of infection or tissue injury. In the adaptive immune response, is required for the differentiation of B-cells into immunoglolin-secreting cells. Plays a major role in the differentiation of CD4(+) T cell subsets. Essential factor for the development of T follicular helper (Tfh) cells that are required for the induction of germinal-center formation. Together with IL21, controls the early generation of Tfh cells and are critical for an effective antibody response to acute viral infection. Required to drive naive CD4(+) T cells to the Th17 lineage, through 'cluster signaling' by dendritic cells. Also required for proliferation of myeloma cells and the survival of plasmablast cells.</text>
</comment>
<comment type="function">
    <text evidence="1 2">Acts as an essential factor in bone homeostasis and on vessels directly or indirectly by induction of VEGF, resulting in increased angiogenesis activity and vascular permeability. Induces, through 'trans-signaling' and synergistically with IL1B and TNF, the production of VEGF. Involved in metabolic controls, is discharged into the bloodstream after muscle contraction increasing lipolysis and improving insulin resistance. 'Trans-signaling' in central nervous system regulates energy and glucose homeostasis. Mediates, through GLP-1, crosstalk between insulin-sensitive tissues, intestinal L cells and pancreatic islets to adapt to changes in insulin demand (By similarity). Also acts as a myokine (By similarity). Plays a protective role during liver injury, being required for maintenance of tissue regeneration. Also has a pivotal role in iron metabolism by regulating HAMP/hepcidin expression upon inflammation or bacterial infection. Through activation of IL6ST-YAP-NOTCH pathway, induces inflammation-induced epithelial regeneration (By similarity).</text>
</comment>
<comment type="subunit">
    <text evidence="2">Component of a hexamer of two molecules each of IL6, IL6R and IL6ST; first binds to IL6R to associate with the signaling subunit IL6ST. Interacts with IL6R (via the N-terminal ectodomain); this interaction may be affected by IL6R-binding with SORL1, hence decreasing IL6 cis signaling. Interacts with SORL1 (via the N-terminal ectodomain); this interaction leads to IL6 internalization and lysosomal degradation. May form a trimeric complex with the soluble SORL1 ectodomain and soluble IL6R receptor; this interaction might stabilize circulating IL6, hence promoting IL6 trans signaling.</text>
</comment>
<comment type="subcellular location">
    <subcellularLocation>
        <location evidence="4">Secreted</location>
    </subcellularLocation>
</comment>
<comment type="induction">
    <text evidence="4">In pancreatic islets, secretion is stimulated by IL1B. In islets from Zucker diabetic fatty (ZDF) rats, but not lean animals, secretion is also increased by endocannabinoid anandamide/AEA.</text>
</comment>
<comment type="similarity">
    <text evidence="5">Belongs to the IL-6 superfamily.</text>
</comment>
<reference key="1">
    <citation type="journal article" date="1989" name="J. Biol. Chem.">
        <title>Structure of the rat interleukin 6 gene and its expression in macrophage-derived cells.</title>
        <authorList>
            <person name="Northemann W."/>
            <person name="Braciak T.A."/>
            <person name="Hattori M."/>
            <person name="Lee F."/>
            <person name="Fey G.H."/>
        </authorList>
    </citation>
    <scope>NUCLEOTIDE SEQUENCE [GENOMIC DNA / MRNA]</scope>
</reference>
<reference key="2">
    <citation type="journal article" date="2013" name="Nat. Med.">
        <title>Activation of the Nlrp3 inflammasome in infiltrating macrophages by endocannabinoids mediates beta cell loss in type 2 diabetes.</title>
        <authorList>
            <person name="Jourdan T."/>
            <person name="Godlewski G."/>
            <person name="Cinar R."/>
            <person name="Bertola A."/>
            <person name="Szanda G."/>
            <person name="Liu J."/>
            <person name="Tam J."/>
            <person name="Han T."/>
            <person name="Mukhopadhyay B."/>
            <person name="Skarulis M.C."/>
            <person name="Ju C."/>
            <person name="Aouadi M."/>
            <person name="Czech M.P."/>
            <person name="Kunos G."/>
        </authorList>
    </citation>
    <scope>SUBCELLULAR LOCATION</scope>
    <scope>INDUCTION BY ENDOCANNABINOID ANANDAMIDE AND IL1B</scope>
</reference>
<dbReference type="EMBL" id="M26744">
    <property type="protein sequence ID" value="AAA77659.1"/>
    <property type="molecule type" value="mRNA"/>
</dbReference>
<dbReference type="EMBL" id="M26745">
    <property type="protein sequence ID" value="AAA41430.1"/>
    <property type="molecule type" value="Genomic_DNA"/>
</dbReference>
<dbReference type="PIR" id="A34247">
    <property type="entry name" value="A34247"/>
</dbReference>
<dbReference type="RefSeq" id="NP_036721.1">
    <property type="nucleotide sequence ID" value="NM_012589.2"/>
</dbReference>
<dbReference type="SMR" id="P20607"/>
<dbReference type="FunCoup" id="P20607">
    <property type="interactions" value="642"/>
</dbReference>
<dbReference type="STRING" id="10116.ENSRNOP00000013732"/>
<dbReference type="PhosphoSitePlus" id="P20607"/>
<dbReference type="PaxDb" id="10116-ENSRNOP00000013732"/>
<dbReference type="Ensembl" id="ENSRNOT00000013732.7">
    <property type="protein sequence ID" value="ENSRNOP00000013732.6"/>
    <property type="gene ID" value="ENSRNOG00000010278.7"/>
</dbReference>
<dbReference type="GeneID" id="24498"/>
<dbReference type="KEGG" id="rno:24498"/>
<dbReference type="UCSC" id="RGD:2901">
    <property type="organism name" value="rat"/>
</dbReference>
<dbReference type="AGR" id="RGD:2901"/>
<dbReference type="CTD" id="3569"/>
<dbReference type="RGD" id="2901">
    <property type="gene designation" value="Il6"/>
</dbReference>
<dbReference type="eggNOG" id="ENOG502S7Q4">
    <property type="taxonomic scope" value="Eukaryota"/>
</dbReference>
<dbReference type="GeneTree" id="ENSGT00390000000878"/>
<dbReference type="HOGENOM" id="CLU_096521_0_0_1"/>
<dbReference type="InParanoid" id="P20607"/>
<dbReference type="OMA" id="FSKCENS"/>
<dbReference type="OrthoDB" id="77144at9989"/>
<dbReference type="PhylomeDB" id="P20607"/>
<dbReference type="Reactome" id="R-RNO-1059683">
    <property type="pathway name" value="Interleukin-6 signaling"/>
</dbReference>
<dbReference type="Reactome" id="R-RNO-110056">
    <property type="pathway name" value="MAPK3 (ERK1) activation"/>
</dbReference>
<dbReference type="Reactome" id="R-RNO-112411">
    <property type="pathway name" value="MAPK1 (ERK2) activation"/>
</dbReference>
<dbReference type="Reactome" id="R-RNO-381426">
    <property type="pathway name" value="Regulation of Insulin-like Growth Factor (IGF) transport and uptake by Insulin-like Growth Factor Binding Proteins (IGFBPs)"/>
</dbReference>
<dbReference type="Reactome" id="R-RNO-8957275">
    <property type="pathway name" value="Post-translational protein phosphorylation"/>
</dbReference>
<dbReference type="PRO" id="PR:P20607"/>
<dbReference type="Proteomes" id="UP000002494">
    <property type="component" value="Chromosome 4"/>
</dbReference>
<dbReference type="Bgee" id="ENSRNOG00000010278">
    <property type="expression patterns" value="Expressed in spleen and 5 other cell types or tissues"/>
</dbReference>
<dbReference type="GO" id="GO:0009897">
    <property type="term" value="C:external side of plasma membrane"/>
    <property type="evidence" value="ECO:0000266"/>
    <property type="project" value="RGD"/>
</dbReference>
<dbReference type="GO" id="GO:0005615">
    <property type="term" value="C:extracellular space"/>
    <property type="evidence" value="ECO:0000314"/>
    <property type="project" value="RGD"/>
</dbReference>
<dbReference type="GO" id="GO:0005896">
    <property type="term" value="C:interleukin-6 receptor complex"/>
    <property type="evidence" value="ECO:0000250"/>
    <property type="project" value="UniProtKB"/>
</dbReference>
<dbReference type="GO" id="GO:0005125">
    <property type="term" value="F:cytokine activity"/>
    <property type="evidence" value="ECO:0000314"/>
    <property type="project" value="RGD"/>
</dbReference>
<dbReference type="GO" id="GO:0008083">
    <property type="term" value="F:growth factor activity"/>
    <property type="evidence" value="ECO:0000266"/>
    <property type="project" value="RGD"/>
</dbReference>
<dbReference type="GO" id="GO:0042802">
    <property type="term" value="F:identical protein binding"/>
    <property type="evidence" value="ECO:0000266"/>
    <property type="project" value="RGD"/>
</dbReference>
<dbReference type="GO" id="GO:0005138">
    <property type="term" value="F:interleukin-6 receptor binding"/>
    <property type="evidence" value="ECO:0000314"/>
    <property type="project" value="RGD"/>
</dbReference>
<dbReference type="GO" id="GO:0005102">
    <property type="term" value="F:signaling receptor binding"/>
    <property type="evidence" value="ECO:0000314"/>
    <property type="project" value="RGD"/>
</dbReference>
<dbReference type="GO" id="GO:0006953">
    <property type="term" value="P:acute-phase response"/>
    <property type="evidence" value="ECO:0007669"/>
    <property type="project" value="UniProtKB-KW"/>
</dbReference>
<dbReference type="GO" id="GO:0046849">
    <property type="term" value="P:bone remodeling"/>
    <property type="evidence" value="ECO:0000270"/>
    <property type="project" value="RGD"/>
</dbReference>
<dbReference type="GO" id="GO:0060445">
    <property type="term" value="P:branching involved in salivary gland morphogenesis"/>
    <property type="evidence" value="ECO:0000266"/>
    <property type="project" value="RGD"/>
</dbReference>
<dbReference type="GO" id="GO:0045454">
    <property type="term" value="P:cell redox homeostasis"/>
    <property type="evidence" value="ECO:0000315"/>
    <property type="project" value="RGD"/>
</dbReference>
<dbReference type="GO" id="GO:0007259">
    <property type="term" value="P:cell surface receptor signaling pathway via JAK-STAT"/>
    <property type="evidence" value="ECO:0000266"/>
    <property type="project" value="RGD"/>
</dbReference>
<dbReference type="GO" id="GO:0097696">
    <property type="term" value="P:cell surface receptor signaling pathway via STAT"/>
    <property type="evidence" value="ECO:0000266"/>
    <property type="project" value="RGD"/>
</dbReference>
<dbReference type="GO" id="GO:0071345">
    <property type="term" value="P:cellular response to cytokine stimulus"/>
    <property type="evidence" value="ECO:0000270"/>
    <property type="project" value="RGD"/>
</dbReference>
<dbReference type="GO" id="GO:0071549">
    <property type="term" value="P:cellular response to dexamethasone stimulus"/>
    <property type="evidence" value="ECO:0000270"/>
    <property type="project" value="RGD"/>
</dbReference>
<dbReference type="GO" id="GO:0071392">
    <property type="term" value="P:cellular response to estradiol stimulus"/>
    <property type="evidence" value="ECO:0000270"/>
    <property type="project" value="RGD"/>
</dbReference>
<dbReference type="GO" id="GO:0035729">
    <property type="term" value="P:cellular response to hepatocyte growth factor stimulus"/>
    <property type="evidence" value="ECO:0000266"/>
    <property type="project" value="RGD"/>
</dbReference>
<dbReference type="GO" id="GO:0070301">
    <property type="term" value="P:cellular response to hydrogen peroxide"/>
    <property type="evidence" value="ECO:0000270"/>
    <property type="project" value="RGD"/>
</dbReference>
<dbReference type="GO" id="GO:0071347">
    <property type="term" value="P:cellular response to interleukin-1"/>
    <property type="evidence" value="ECO:0000270"/>
    <property type="project" value="RGD"/>
</dbReference>
<dbReference type="GO" id="GO:0097398">
    <property type="term" value="P:cellular response to interleukin-17"/>
    <property type="evidence" value="ECO:0000266"/>
    <property type="project" value="RGD"/>
</dbReference>
<dbReference type="GO" id="GO:0071222">
    <property type="term" value="P:cellular response to lipopolysaccharide"/>
    <property type="evidence" value="ECO:0000270"/>
    <property type="project" value="RGD"/>
</dbReference>
<dbReference type="GO" id="GO:0031669">
    <property type="term" value="P:cellular response to nutrient levels"/>
    <property type="evidence" value="ECO:0000270"/>
    <property type="project" value="RGD"/>
</dbReference>
<dbReference type="GO" id="GO:1990646">
    <property type="term" value="P:cellular response to prolactin"/>
    <property type="evidence" value="ECO:0000270"/>
    <property type="project" value="RGD"/>
</dbReference>
<dbReference type="GO" id="GO:0071356">
    <property type="term" value="P:cellular response to tumor necrosis factor"/>
    <property type="evidence" value="ECO:0000270"/>
    <property type="project" value="RGD"/>
</dbReference>
<dbReference type="GO" id="GO:0098586">
    <property type="term" value="P:cellular response to virus"/>
    <property type="evidence" value="ECO:0000250"/>
    <property type="project" value="UniProtKB"/>
</dbReference>
<dbReference type="GO" id="GO:0019221">
    <property type="term" value="P:cytokine-mediated signaling pathway"/>
    <property type="evidence" value="ECO:0000266"/>
    <property type="project" value="RGD"/>
</dbReference>
<dbReference type="GO" id="GO:0042832">
    <property type="term" value="P:defense response to protozoan"/>
    <property type="evidence" value="ECO:0000266"/>
    <property type="project" value="RGD"/>
</dbReference>
<dbReference type="GO" id="GO:0051607">
    <property type="term" value="P:defense response to virus"/>
    <property type="evidence" value="ECO:0000266"/>
    <property type="project" value="RGD"/>
</dbReference>
<dbReference type="GO" id="GO:0031018">
    <property type="term" value="P:endocrine pancreas development"/>
    <property type="evidence" value="ECO:0000266"/>
    <property type="project" value="RGD"/>
</dbReference>
<dbReference type="GO" id="GO:0060664">
    <property type="term" value="P:epithelial cell proliferation involved in salivary gland morphogenesis"/>
    <property type="evidence" value="ECO:0000266"/>
    <property type="project" value="RGD"/>
</dbReference>
<dbReference type="GO" id="GO:0010467">
    <property type="term" value="P:gene expression"/>
    <property type="evidence" value="ECO:0000266"/>
    <property type="project" value="RGD"/>
</dbReference>
<dbReference type="GO" id="GO:0002314">
    <property type="term" value="P:germinal center B cell differentiation"/>
    <property type="evidence" value="ECO:0000250"/>
    <property type="project" value="UniProtKB"/>
</dbReference>
<dbReference type="GO" id="GO:0070091">
    <property type="term" value="P:glucagon secretion"/>
    <property type="evidence" value="ECO:0000266"/>
    <property type="project" value="RGD"/>
</dbReference>
<dbReference type="GO" id="GO:0042593">
    <property type="term" value="P:glucose homeostasis"/>
    <property type="evidence" value="ECO:0000250"/>
    <property type="project" value="UniProtKB"/>
</dbReference>
<dbReference type="GO" id="GO:0002384">
    <property type="term" value="P:hepatic immune response"/>
    <property type="evidence" value="ECO:0000266"/>
    <property type="project" value="RGD"/>
</dbReference>
<dbReference type="GO" id="GO:0072574">
    <property type="term" value="P:hepatocyte proliferation"/>
    <property type="evidence" value="ECO:0000250"/>
    <property type="project" value="UniProtKB"/>
</dbReference>
<dbReference type="GO" id="GO:0006954">
    <property type="term" value="P:inflammatory response"/>
    <property type="evidence" value="ECO:0000266"/>
    <property type="project" value="RGD"/>
</dbReference>
<dbReference type="GO" id="GO:0090594">
    <property type="term" value="P:inflammatory response to wounding"/>
    <property type="evidence" value="ECO:0000266"/>
    <property type="project" value="RGD"/>
</dbReference>
<dbReference type="GO" id="GO:0070102">
    <property type="term" value="P:interleukin-6-mediated signaling pathway"/>
    <property type="evidence" value="ECO:0000314"/>
    <property type="project" value="ARUK-UCL"/>
</dbReference>
<dbReference type="GO" id="GO:0097421">
    <property type="term" value="P:liver regeneration"/>
    <property type="evidence" value="ECO:0000250"/>
    <property type="project" value="UniProtKB"/>
</dbReference>
<dbReference type="GO" id="GO:0031294">
    <property type="term" value="P:lymphocyte costimulation"/>
    <property type="evidence" value="ECO:0000270"/>
    <property type="project" value="RGD"/>
</dbReference>
<dbReference type="GO" id="GO:0046716">
    <property type="term" value="P:muscle cell cellular homeostasis"/>
    <property type="evidence" value="ECO:0000266"/>
    <property type="project" value="RGD"/>
</dbReference>
<dbReference type="GO" id="GO:0002262">
    <property type="term" value="P:myeloid cell homeostasis"/>
    <property type="evidence" value="ECO:0000266"/>
    <property type="project" value="RGD"/>
</dbReference>
<dbReference type="GO" id="GO:0043066">
    <property type="term" value="P:negative regulation of apoptotic process"/>
    <property type="evidence" value="ECO:0000266"/>
    <property type="project" value="RGD"/>
</dbReference>
<dbReference type="GO" id="GO:0045779">
    <property type="term" value="P:negative regulation of bone resorption"/>
    <property type="evidence" value="ECO:0000266"/>
    <property type="project" value="RGD"/>
</dbReference>
<dbReference type="GO" id="GO:0008285">
    <property type="term" value="P:negative regulation of cell population proliferation"/>
    <property type="evidence" value="ECO:0000315"/>
    <property type="project" value="RGD"/>
</dbReference>
<dbReference type="GO" id="GO:0032682">
    <property type="term" value="P:negative regulation of chemokine production"/>
    <property type="evidence" value="ECO:0000266"/>
    <property type="project" value="RGD"/>
</dbReference>
<dbReference type="GO" id="GO:0032966">
    <property type="term" value="P:negative regulation of collagen biosynthetic process"/>
    <property type="evidence" value="ECO:0000266"/>
    <property type="project" value="RGD"/>
</dbReference>
<dbReference type="GO" id="GO:0045721">
    <property type="term" value="P:negative regulation of gluconeogenesis"/>
    <property type="evidence" value="ECO:0000314"/>
    <property type="project" value="RGD"/>
</dbReference>
<dbReference type="GO" id="GO:0046888">
    <property type="term" value="P:negative regulation of hormone secretion"/>
    <property type="evidence" value="ECO:0000266"/>
    <property type="project" value="RGD"/>
</dbReference>
<dbReference type="GO" id="GO:2000660">
    <property type="term" value="P:negative regulation of interleukin-1-mediated signaling pathway"/>
    <property type="evidence" value="ECO:0000266"/>
    <property type="project" value="RGD"/>
</dbReference>
<dbReference type="GO" id="GO:0045837">
    <property type="term" value="P:negative regulation of membrane potential"/>
    <property type="evidence" value="ECO:0000315"/>
    <property type="project" value="RGD"/>
</dbReference>
<dbReference type="GO" id="GO:0048635">
    <property type="term" value="P:negative regulation of muscle organ development"/>
    <property type="evidence" value="ECO:0000314"/>
    <property type="project" value="RGD"/>
</dbReference>
<dbReference type="GO" id="GO:0043524">
    <property type="term" value="P:negative regulation of neuron apoptotic process"/>
    <property type="evidence" value="ECO:0000314"/>
    <property type="project" value="RGD"/>
</dbReference>
<dbReference type="GO" id="GO:2000635">
    <property type="term" value="P:negative regulation of primary miRNA processing"/>
    <property type="evidence" value="ECO:0000266"/>
    <property type="project" value="RGD"/>
</dbReference>
<dbReference type="GO" id="GO:0031175">
    <property type="term" value="P:neuron projection development"/>
    <property type="evidence" value="ECO:0000266"/>
    <property type="project" value="RGD"/>
</dbReference>
<dbReference type="GO" id="GO:0001781">
    <property type="term" value="P:neutrophil apoptotic process"/>
    <property type="evidence" value="ECO:0000266"/>
    <property type="project" value="RGD"/>
</dbReference>
<dbReference type="GO" id="GO:0002675">
    <property type="term" value="P:positive regulation of acute inflammatory response"/>
    <property type="evidence" value="ECO:0000266"/>
    <property type="project" value="RGD"/>
</dbReference>
<dbReference type="GO" id="GO:1902512">
    <property type="term" value="P:positive regulation of apoptotic DNA fragmentation"/>
    <property type="evidence" value="ECO:0000266"/>
    <property type="project" value="RGD"/>
</dbReference>
<dbReference type="GO" id="GO:0043065">
    <property type="term" value="P:positive regulation of apoptotic process"/>
    <property type="evidence" value="ECO:0000266"/>
    <property type="project" value="RGD"/>
</dbReference>
<dbReference type="GO" id="GO:0050871">
    <property type="term" value="P:positive regulation of B cell activation"/>
    <property type="evidence" value="ECO:0000266"/>
    <property type="project" value="RGD"/>
</dbReference>
<dbReference type="GO" id="GO:0008284">
    <property type="term" value="P:positive regulation of cell population proliferation"/>
    <property type="evidence" value="ECO:0000266"/>
    <property type="project" value="RGD"/>
</dbReference>
<dbReference type="GO" id="GO:0071864">
    <property type="term" value="P:positive regulation of cell proliferation in bone marrow"/>
    <property type="evidence" value="ECO:0000266"/>
    <property type="project" value="RGD"/>
</dbReference>
<dbReference type="GO" id="GO:0032722">
    <property type="term" value="P:positive regulation of chemokine production"/>
    <property type="evidence" value="ECO:0000266"/>
    <property type="project" value="RGD"/>
</dbReference>
<dbReference type="GO" id="GO:1900017">
    <property type="term" value="P:positive regulation of cytokine production involved in inflammatory response"/>
    <property type="evidence" value="ECO:0000266"/>
    <property type="project" value="RGD"/>
</dbReference>
<dbReference type="GO" id="GO:0045740">
    <property type="term" value="P:positive regulation of DNA replication"/>
    <property type="evidence" value="ECO:0000315"/>
    <property type="project" value="RGD"/>
</dbReference>
<dbReference type="GO" id="GO:0045893">
    <property type="term" value="P:positive regulation of DNA-templated transcription"/>
    <property type="evidence" value="ECO:0000266"/>
    <property type="project" value="RGD"/>
</dbReference>
<dbReference type="GO" id="GO:0050679">
    <property type="term" value="P:positive regulation of epithelial cell proliferation"/>
    <property type="evidence" value="ECO:0000266"/>
    <property type="project" value="RGD"/>
</dbReference>
<dbReference type="GO" id="GO:0010718">
    <property type="term" value="P:positive regulation of epithelial to mesenchymal transition"/>
    <property type="evidence" value="ECO:0000266"/>
    <property type="project" value="RGD"/>
</dbReference>
<dbReference type="GO" id="GO:0070374">
    <property type="term" value="P:positive regulation of ERK1 and ERK2 cascade"/>
    <property type="evidence" value="ECO:0000314"/>
    <property type="project" value="RGD"/>
</dbReference>
<dbReference type="GO" id="GO:2000866">
    <property type="term" value="P:positive regulation of estradiol secretion"/>
    <property type="evidence" value="ECO:0000266"/>
    <property type="project" value="RGD"/>
</dbReference>
<dbReference type="GO" id="GO:0090091">
    <property type="term" value="P:positive regulation of extracellular matrix disassembly"/>
    <property type="evidence" value="ECO:0000266"/>
    <property type="project" value="RGD"/>
</dbReference>
<dbReference type="GO" id="GO:0010628">
    <property type="term" value="P:positive regulation of gene expression"/>
    <property type="evidence" value="ECO:0000314"/>
    <property type="project" value="RGD"/>
</dbReference>
<dbReference type="GO" id="GO:0060252">
    <property type="term" value="P:positive regulation of glial cell proliferation"/>
    <property type="evidence" value="ECO:0000266"/>
    <property type="project" value="RGD"/>
</dbReference>
<dbReference type="GO" id="GO:0014015">
    <property type="term" value="P:positive regulation of gliogenesis"/>
    <property type="evidence" value="ECO:0000266"/>
    <property type="project" value="RGD"/>
</dbReference>
<dbReference type="GO" id="GO:0002639">
    <property type="term" value="P:positive regulation of immunoglobulin production"/>
    <property type="evidence" value="ECO:0000250"/>
    <property type="project" value="UniProtKB"/>
</dbReference>
<dbReference type="GO" id="GO:0032731">
    <property type="term" value="P:positive regulation of interleukin-1 beta production"/>
    <property type="evidence" value="ECO:0000266"/>
    <property type="project" value="RGD"/>
</dbReference>
<dbReference type="GO" id="GO:0032733">
    <property type="term" value="P:positive regulation of interleukin-10 production"/>
    <property type="evidence" value="ECO:0000266"/>
    <property type="project" value="RGD"/>
</dbReference>
<dbReference type="GO" id="GO:0032740">
    <property type="term" value="P:positive regulation of interleukin-17 production"/>
    <property type="evidence" value="ECO:0000266"/>
    <property type="project" value="RGD"/>
</dbReference>
<dbReference type="GO" id="GO:0032745">
    <property type="term" value="P:positive regulation of interleukin-21 production"/>
    <property type="evidence" value="ECO:0000250"/>
    <property type="project" value="UniProtKB"/>
</dbReference>
<dbReference type="GO" id="GO:0032755">
    <property type="term" value="P:positive regulation of interleukin-6 production"/>
    <property type="evidence" value="ECO:0000266"/>
    <property type="project" value="RGD"/>
</dbReference>
<dbReference type="GO" id="GO:0032757">
    <property type="term" value="P:positive regulation of interleukin-8 production"/>
    <property type="evidence" value="ECO:0000266"/>
    <property type="project" value="RGD"/>
</dbReference>
<dbReference type="GO" id="GO:1904996">
    <property type="term" value="P:positive regulation of leukocyte adhesion to vascular endothelial cell"/>
    <property type="evidence" value="ECO:0000266"/>
    <property type="project" value="RGD"/>
</dbReference>
<dbReference type="GO" id="GO:0043410">
    <property type="term" value="P:positive regulation of MAPK cascade"/>
    <property type="evidence" value="ECO:0000266"/>
    <property type="project" value="RGD"/>
</dbReference>
<dbReference type="GO" id="GO:1902895">
    <property type="term" value="P:positive regulation of miRNA transcription"/>
    <property type="evidence" value="ECO:0000266"/>
    <property type="project" value="RGD"/>
</dbReference>
<dbReference type="GO" id="GO:0045666">
    <property type="term" value="P:positive regulation of neuron differentiation"/>
    <property type="evidence" value="ECO:0000315"/>
    <property type="project" value="RGD"/>
</dbReference>
<dbReference type="GO" id="GO:0010976">
    <property type="term" value="P:positive regulation of neuron projection development"/>
    <property type="evidence" value="ECO:0000315"/>
    <property type="project" value="RGD"/>
</dbReference>
<dbReference type="GO" id="GO:0045429">
    <property type="term" value="P:positive regulation of nitric oxide biosynthetic process"/>
    <property type="evidence" value="ECO:0000314"/>
    <property type="project" value="RGD"/>
</dbReference>
<dbReference type="GO" id="GO:0051897">
    <property type="term" value="P:positive regulation of phosphatidylinositol 3-kinase/protein kinase B signal transduction"/>
    <property type="evidence" value="ECO:0000314"/>
    <property type="project" value="RGD"/>
</dbReference>
<dbReference type="GO" id="GO:1901731">
    <property type="term" value="P:positive regulation of platelet aggregation"/>
    <property type="evidence" value="ECO:0000266"/>
    <property type="project" value="RGD"/>
</dbReference>
<dbReference type="GO" id="GO:0042307">
    <property type="term" value="P:positive regulation of protein import into nucleus"/>
    <property type="evidence" value="ECO:0000314"/>
    <property type="project" value="RGD"/>
</dbReference>
<dbReference type="GO" id="GO:0046427">
    <property type="term" value="P:positive regulation of receptor signaling pathway via JAK-STAT"/>
    <property type="evidence" value="ECO:0000314"/>
    <property type="project" value="RGD"/>
</dbReference>
<dbReference type="GO" id="GO:1904894">
    <property type="term" value="P:positive regulation of receptor signaling pathway via STAT"/>
    <property type="evidence" value="ECO:0000266"/>
    <property type="project" value="RGD"/>
</dbReference>
<dbReference type="GO" id="GO:0048661">
    <property type="term" value="P:positive regulation of smooth muscle cell proliferation"/>
    <property type="evidence" value="ECO:0000266"/>
    <property type="project" value="RGD"/>
</dbReference>
<dbReference type="GO" id="GO:0042102">
    <property type="term" value="P:positive regulation of T cell proliferation"/>
    <property type="evidence" value="ECO:0000266"/>
    <property type="project" value="RGD"/>
</dbReference>
<dbReference type="GO" id="GO:2000553">
    <property type="term" value="P:positive regulation of T-helper 2 cell cytokine production"/>
    <property type="evidence" value="ECO:0000266"/>
    <property type="project" value="RGD"/>
</dbReference>
<dbReference type="GO" id="GO:0045630">
    <property type="term" value="P:positive regulation of T-helper 2 cell differentiation"/>
    <property type="evidence" value="ECO:0000266"/>
    <property type="project" value="RGD"/>
</dbReference>
<dbReference type="GO" id="GO:0045944">
    <property type="term" value="P:positive regulation of transcription by RNA polymerase II"/>
    <property type="evidence" value="ECO:0000314"/>
    <property type="project" value="ARUK-UCL"/>
</dbReference>
<dbReference type="GO" id="GO:0045727">
    <property type="term" value="P:positive regulation of translation"/>
    <property type="evidence" value="ECO:0000266"/>
    <property type="project" value="RGD"/>
</dbReference>
<dbReference type="GO" id="GO:0051971">
    <property type="term" value="P:positive regulation of transmission of nerve impulse"/>
    <property type="evidence" value="ECO:0000314"/>
    <property type="project" value="RGD"/>
</dbReference>
<dbReference type="GO" id="GO:0032760">
    <property type="term" value="P:positive regulation of tumor necrosis factor production"/>
    <property type="evidence" value="ECO:0000266"/>
    <property type="project" value="RGD"/>
</dbReference>
<dbReference type="GO" id="GO:0010575">
    <property type="term" value="P:positive regulation of vascular endothelial growth factor production"/>
    <property type="evidence" value="ECO:0000266"/>
    <property type="project" value="RGD"/>
</dbReference>
<dbReference type="GO" id="GO:0042981">
    <property type="term" value="P:regulation of apoptotic process"/>
    <property type="evidence" value="ECO:0000266"/>
    <property type="project" value="RGD"/>
</dbReference>
<dbReference type="GO" id="GO:0042127">
    <property type="term" value="P:regulation of cell population proliferation"/>
    <property type="evidence" value="ECO:0000266"/>
    <property type="project" value="RGD"/>
</dbReference>
<dbReference type="GO" id="GO:0008360">
    <property type="term" value="P:regulation of cell shape"/>
    <property type="evidence" value="ECO:0000314"/>
    <property type="project" value="RGD"/>
</dbReference>
<dbReference type="GO" id="GO:0045188">
    <property type="term" value="P:regulation of circadian sleep/wake cycle, non-REM sleep"/>
    <property type="evidence" value="ECO:0000315"/>
    <property type="project" value="RGD"/>
</dbReference>
<dbReference type="GO" id="GO:0070092">
    <property type="term" value="P:regulation of glucagon secretion"/>
    <property type="evidence" value="ECO:0000250"/>
    <property type="project" value="UniProtKB"/>
</dbReference>
<dbReference type="GO" id="GO:0050796">
    <property type="term" value="P:regulation of insulin secretion"/>
    <property type="evidence" value="ECO:0000250"/>
    <property type="project" value="UniProtKB"/>
</dbReference>
<dbReference type="GO" id="GO:0010574">
    <property type="term" value="P:regulation of vascular endothelial growth factor production"/>
    <property type="evidence" value="ECO:0000266"/>
    <property type="project" value="RGD"/>
</dbReference>
<dbReference type="GO" id="GO:0014823">
    <property type="term" value="P:response to activity"/>
    <property type="evidence" value="ECO:0000250"/>
    <property type="project" value="UniProtKB"/>
</dbReference>
<dbReference type="GO" id="GO:0043200">
    <property type="term" value="P:response to amino acid"/>
    <property type="evidence" value="ECO:0000270"/>
    <property type="project" value="RGD"/>
</dbReference>
<dbReference type="GO" id="GO:0010996">
    <property type="term" value="P:response to auditory stimulus"/>
    <property type="evidence" value="ECO:0000270"/>
    <property type="project" value="RGD"/>
</dbReference>
<dbReference type="GO" id="GO:0009617">
    <property type="term" value="P:response to bacterium"/>
    <property type="evidence" value="ECO:0000270"/>
    <property type="project" value="RGD"/>
</dbReference>
<dbReference type="GO" id="GO:0031000">
    <property type="term" value="P:response to caffeine"/>
    <property type="evidence" value="ECO:0000270"/>
    <property type="project" value="RGD"/>
</dbReference>
<dbReference type="GO" id="GO:0051592">
    <property type="term" value="P:response to calcium ion"/>
    <property type="evidence" value="ECO:0000270"/>
    <property type="project" value="RGD"/>
</dbReference>
<dbReference type="GO" id="GO:0034097">
    <property type="term" value="P:response to cytokine"/>
    <property type="evidence" value="ECO:0000270"/>
    <property type="project" value="RGD"/>
</dbReference>
<dbReference type="GO" id="GO:0051602">
    <property type="term" value="P:response to electrical stimulus"/>
    <property type="evidence" value="ECO:0000270"/>
    <property type="project" value="RGD"/>
</dbReference>
<dbReference type="GO" id="GO:0045471">
    <property type="term" value="P:response to ethanol"/>
    <property type="evidence" value="ECO:0000270"/>
    <property type="project" value="RGD"/>
</dbReference>
<dbReference type="GO" id="GO:0051384">
    <property type="term" value="P:response to glucocorticoid"/>
    <property type="evidence" value="ECO:0000266"/>
    <property type="project" value="RGD"/>
</dbReference>
<dbReference type="GO" id="GO:0140459">
    <property type="term" value="P:response to Gram-positive bacterium"/>
    <property type="evidence" value="ECO:0000270"/>
    <property type="project" value="RGD"/>
</dbReference>
<dbReference type="GO" id="GO:0001666">
    <property type="term" value="P:response to hypoxia"/>
    <property type="evidence" value="ECO:0000270"/>
    <property type="project" value="RGD"/>
</dbReference>
<dbReference type="GO" id="GO:0032868">
    <property type="term" value="P:response to insulin"/>
    <property type="evidence" value="ECO:0000270"/>
    <property type="project" value="RGD"/>
</dbReference>
<dbReference type="GO" id="GO:0032496">
    <property type="term" value="P:response to lipopolysaccharide"/>
    <property type="evidence" value="ECO:0000270"/>
    <property type="project" value="RGD"/>
</dbReference>
<dbReference type="GO" id="GO:0009612">
    <property type="term" value="P:response to mechanical stimulus"/>
    <property type="evidence" value="ECO:0000270"/>
    <property type="project" value="RGD"/>
</dbReference>
<dbReference type="GO" id="GO:0031667">
    <property type="term" value="P:response to nutrient levels"/>
    <property type="evidence" value="ECO:0000270"/>
    <property type="project" value="RGD"/>
</dbReference>
<dbReference type="GO" id="GO:0009611">
    <property type="term" value="P:response to wounding"/>
    <property type="evidence" value="ECO:0000266"/>
    <property type="project" value="RGD"/>
</dbReference>
<dbReference type="GO" id="GO:0009410">
    <property type="term" value="P:response to xenobiotic stimulus"/>
    <property type="evidence" value="ECO:0000270"/>
    <property type="project" value="RGD"/>
</dbReference>
<dbReference type="GO" id="GO:0001878">
    <property type="term" value="P:response to yeast"/>
    <property type="evidence" value="ECO:0000270"/>
    <property type="project" value="RGD"/>
</dbReference>
<dbReference type="GO" id="GO:0042110">
    <property type="term" value="P:T cell activation"/>
    <property type="evidence" value="ECO:0000266"/>
    <property type="project" value="RGD"/>
</dbReference>
<dbReference type="GO" id="GO:0061470">
    <property type="term" value="P:T follicular helper cell differentiation"/>
    <property type="evidence" value="ECO:0000250"/>
    <property type="project" value="UniProtKB"/>
</dbReference>
<dbReference type="GO" id="GO:0072540">
    <property type="term" value="P:T-helper 17 cell lineage commitment"/>
    <property type="evidence" value="ECO:0000250"/>
    <property type="project" value="UniProtKB"/>
</dbReference>
<dbReference type="GO" id="GO:0045064">
    <property type="term" value="P:T-helper 2 cell differentiation"/>
    <property type="evidence" value="ECO:0000266"/>
    <property type="project" value="RGD"/>
</dbReference>
<dbReference type="GO" id="GO:0010573">
    <property type="term" value="P:vascular endothelial growth factor production"/>
    <property type="evidence" value="ECO:0000250"/>
    <property type="project" value="UniProtKB"/>
</dbReference>
<dbReference type="FunFam" id="1.20.1250.10:FF:000006">
    <property type="entry name" value="Interleukin-6"/>
    <property type="match status" value="1"/>
</dbReference>
<dbReference type="Gene3D" id="1.20.1250.10">
    <property type="match status" value="1"/>
</dbReference>
<dbReference type="InterPro" id="IPR009079">
    <property type="entry name" value="4_helix_cytokine-like_core"/>
</dbReference>
<dbReference type="InterPro" id="IPR003574">
    <property type="entry name" value="IL-6-like"/>
</dbReference>
<dbReference type="InterPro" id="IPR030474">
    <property type="entry name" value="IL-6/GCSF/MGF"/>
</dbReference>
<dbReference type="InterPro" id="IPR030473">
    <property type="entry name" value="IL6/GCSF/MGF_CS"/>
</dbReference>
<dbReference type="PANTHER" id="PTHR48494">
    <property type="entry name" value="INTERLEUKIN-6"/>
    <property type="match status" value="1"/>
</dbReference>
<dbReference type="PANTHER" id="PTHR48494:SF1">
    <property type="entry name" value="INTERLEUKIN-6"/>
    <property type="match status" value="1"/>
</dbReference>
<dbReference type="Pfam" id="PF00489">
    <property type="entry name" value="IL6"/>
    <property type="match status" value="1"/>
</dbReference>
<dbReference type="PIRSF" id="PIRSF001935">
    <property type="entry name" value="IL6_MGF_GCSF"/>
    <property type="match status" value="1"/>
</dbReference>
<dbReference type="PRINTS" id="PR00433">
    <property type="entry name" value="IL6GCSFMGF"/>
</dbReference>
<dbReference type="PRINTS" id="PR00434">
    <property type="entry name" value="INTERLEUKIN6"/>
</dbReference>
<dbReference type="SMART" id="SM00126">
    <property type="entry name" value="IL6"/>
    <property type="match status" value="1"/>
</dbReference>
<dbReference type="SUPFAM" id="SSF47266">
    <property type="entry name" value="4-helical cytokines"/>
    <property type="match status" value="1"/>
</dbReference>
<dbReference type="PROSITE" id="PS00254">
    <property type="entry name" value="INTERLEUKIN_6"/>
    <property type="match status" value="1"/>
</dbReference>